<keyword id="KW-0002">3D-structure</keyword>
<keyword id="KW-0067">ATP-binding</keyword>
<keyword id="KW-0173">Coenzyme A biosynthesis</keyword>
<keyword id="KW-0963">Cytoplasm</keyword>
<keyword id="KW-0460">Magnesium</keyword>
<keyword id="KW-0547">Nucleotide-binding</keyword>
<keyword id="KW-0548">Nucleotidyltransferase</keyword>
<keyword id="KW-1185">Reference proteome</keyword>
<keyword id="KW-0808">Transferase</keyword>
<dbReference type="EC" id="2.7.7.3" evidence="1"/>
<dbReference type="EMBL" id="AE016830">
    <property type="protein sequence ID" value="AAO82169.1"/>
    <property type="molecule type" value="Genomic_DNA"/>
</dbReference>
<dbReference type="RefSeq" id="NP_816099.1">
    <property type="nucleotide sequence ID" value="NC_004668.1"/>
</dbReference>
<dbReference type="RefSeq" id="WP_002356693.1">
    <property type="nucleotide sequence ID" value="NZ_KE136528.1"/>
</dbReference>
<dbReference type="PDB" id="3ND5">
    <property type="method" value="X-ray"/>
    <property type="resolution" value="2.30 A"/>
    <property type="chains" value="A/B/C/D/E/F=1-163"/>
</dbReference>
<dbReference type="PDB" id="3ND6">
    <property type="method" value="X-ray"/>
    <property type="resolution" value="2.30 A"/>
    <property type="chains" value="A/B/C/D/E/F=1-163"/>
</dbReference>
<dbReference type="PDB" id="3ND7">
    <property type="method" value="X-ray"/>
    <property type="resolution" value="2.40 A"/>
    <property type="chains" value="A/B/C/D/E/F=1-163"/>
</dbReference>
<dbReference type="PDBsum" id="3ND5"/>
<dbReference type="PDBsum" id="3ND6"/>
<dbReference type="PDBsum" id="3ND7"/>
<dbReference type="SMR" id="Q831P9"/>
<dbReference type="STRING" id="226185.EF_2451"/>
<dbReference type="BindingDB" id="Q831P9"/>
<dbReference type="EnsemblBacteria" id="AAO82169">
    <property type="protein sequence ID" value="AAO82169"/>
    <property type="gene ID" value="EF_2451"/>
</dbReference>
<dbReference type="KEGG" id="efa:EF2451"/>
<dbReference type="PATRIC" id="fig|226185.45.peg.1094"/>
<dbReference type="eggNOG" id="COG0669">
    <property type="taxonomic scope" value="Bacteria"/>
</dbReference>
<dbReference type="HOGENOM" id="CLU_100149_0_1_9"/>
<dbReference type="UniPathway" id="UPA00241">
    <property type="reaction ID" value="UER00355"/>
</dbReference>
<dbReference type="EvolutionaryTrace" id="Q831P9"/>
<dbReference type="Proteomes" id="UP000001415">
    <property type="component" value="Chromosome"/>
</dbReference>
<dbReference type="GO" id="GO:0005737">
    <property type="term" value="C:cytoplasm"/>
    <property type="evidence" value="ECO:0007669"/>
    <property type="project" value="UniProtKB-SubCell"/>
</dbReference>
<dbReference type="GO" id="GO:0005524">
    <property type="term" value="F:ATP binding"/>
    <property type="evidence" value="ECO:0007669"/>
    <property type="project" value="UniProtKB-KW"/>
</dbReference>
<dbReference type="GO" id="GO:0004595">
    <property type="term" value="F:pantetheine-phosphate adenylyltransferase activity"/>
    <property type="evidence" value="ECO:0007669"/>
    <property type="project" value="UniProtKB-UniRule"/>
</dbReference>
<dbReference type="GO" id="GO:0015937">
    <property type="term" value="P:coenzyme A biosynthetic process"/>
    <property type="evidence" value="ECO:0007669"/>
    <property type="project" value="UniProtKB-UniRule"/>
</dbReference>
<dbReference type="CDD" id="cd02163">
    <property type="entry name" value="PPAT"/>
    <property type="match status" value="1"/>
</dbReference>
<dbReference type="Gene3D" id="3.40.50.620">
    <property type="entry name" value="HUPs"/>
    <property type="match status" value="1"/>
</dbReference>
<dbReference type="HAMAP" id="MF_00151">
    <property type="entry name" value="PPAT_bact"/>
    <property type="match status" value="1"/>
</dbReference>
<dbReference type="InterPro" id="IPR004821">
    <property type="entry name" value="Cyt_trans-like"/>
</dbReference>
<dbReference type="InterPro" id="IPR001980">
    <property type="entry name" value="PPAT"/>
</dbReference>
<dbReference type="InterPro" id="IPR014729">
    <property type="entry name" value="Rossmann-like_a/b/a_fold"/>
</dbReference>
<dbReference type="NCBIfam" id="TIGR01510">
    <property type="entry name" value="coaD_prev_kdtB"/>
    <property type="match status" value="1"/>
</dbReference>
<dbReference type="NCBIfam" id="TIGR00125">
    <property type="entry name" value="cyt_tran_rel"/>
    <property type="match status" value="1"/>
</dbReference>
<dbReference type="PANTHER" id="PTHR21342">
    <property type="entry name" value="PHOSPHOPANTETHEINE ADENYLYLTRANSFERASE"/>
    <property type="match status" value="1"/>
</dbReference>
<dbReference type="PANTHER" id="PTHR21342:SF1">
    <property type="entry name" value="PHOSPHOPANTETHEINE ADENYLYLTRANSFERASE"/>
    <property type="match status" value="1"/>
</dbReference>
<dbReference type="Pfam" id="PF01467">
    <property type="entry name" value="CTP_transf_like"/>
    <property type="match status" value="1"/>
</dbReference>
<dbReference type="PRINTS" id="PR01020">
    <property type="entry name" value="LPSBIOSNTHSS"/>
</dbReference>
<dbReference type="SUPFAM" id="SSF52374">
    <property type="entry name" value="Nucleotidylyl transferase"/>
    <property type="match status" value="1"/>
</dbReference>
<sequence>MRKIALFPGSFDPMTNGHLNLIERSAKLFDEVIIGVFINTSKQTLFTPEEKKYLIEEATKEMPNVRVIMQETQLTVESAKSLGANFLIRGIRNVKDYEYEKDIAKMNQHLAPEIETVFLLAEEPYAHVSSSLLKEVLRFGGDVSDYLPPNIYHALKQKKNDWS</sequence>
<evidence type="ECO:0000255" key="1">
    <source>
        <dbReference type="HAMAP-Rule" id="MF_00151"/>
    </source>
</evidence>
<evidence type="ECO:0000269" key="2">
    <source>
    </source>
</evidence>
<evidence type="ECO:0000269" key="3">
    <source>
    </source>
</evidence>
<evidence type="ECO:0000303" key="4">
    <source>
    </source>
</evidence>
<evidence type="ECO:0000303" key="5">
    <source>
    </source>
</evidence>
<evidence type="ECO:0000305" key="6">
    <source>
    </source>
</evidence>
<evidence type="ECO:0007744" key="7">
    <source>
        <dbReference type="PDB" id="3ND6"/>
    </source>
</evidence>
<evidence type="ECO:0007744" key="8">
    <source>
        <dbReference type="PDB" id="3ND7"/>
    </source>
</evidence>
<evidence type="ECO:0007829" key="9">
    <source>
        <dbReference type="PDB" id="3ND5"/>
    </source>
</evidence>
<reference key="1">
    <citation type="journal article" date="2003" name="Science">
        <title>Role of mobile DNA in the evolution of vancomycin-resistant Enterococcus faecalis.</title>
        <authorList>
            <person name="Paulsen I.T."/>
            <person name="Banerjei L."/>
            <person name="Myers G.S.A."/>
            <person name="Nelson K.E."/>
            <person name="Seshadri R."/>
            <person name="Read T.D."/>
            <person name="Fouts D.E."/>
            <person name="Eisen J.A."/>
            <person name="Gill S.R."/>
            <person name="Heidelberg J.F."/>
            <person name="Tettelin H."/>
            <person name="Dodson R.J."/>
            <person name="Umayam L.A."/>
            <person name="Brinkac L.M."/>
            <person name="Beanan M.J."/>
            <person name="Daugherty S.C."/>
            <person name="DeBoy R.T."/>
            <person name="Durkin S.A."/>
            <person name="Kolonay J.F."/>
            <person name="Madupu R."/>
            <person name="Nelson W.C."/>
            <person name="Vamathevan J.J."/>
            <person name="Tran B."/>
            <person name="Upton J."/>
            <person name="Hansen T."/>
            <person name="Shetty J."/>
            <person name="Khouri H.M."/>
            <person name="Utterback T.R."/>
            <person name="Radune D."/>
            <person name="Ketchum K.A."/>
            <person name="Dougherty B.A."/>
            <person name="Fraser C.M."/>
        </authorList>
    </citation>
    <scope>NUCLEOTIDE SEQUENCE [LARGE SCALE GENOMIC DNA]</scope>
    <source>
        <strain>ATCC 700802 / V583</strain>
    </source>
</reference>
<reference key="2">
    <citation type="journal article" date="2006" name="Acta Crystallogr. F">
        <title>Overexpression, crystallization and preliminary X-ray crystallographic analysis of phosphopantetheine adenylyltransferase from Enterococcus faecalis.</title>
        <authorList>
            <person name="Kang J.Y."/>
            <person name="Lee H.H."/>
            <person name="Yoon H.J."/>
            <person name="Kim H.S."/>
            <person name="Suh S.W."/>
        </authorList>
    </citation>
    <scope>SUBUNIT</scope>
    <source>
        <strain>ATCC 700802 / V583</strain>
    </source>
</reference>
<reference key="3">
    <citation type="journal article" date="2011" name="Mol. Cells">
        <title>Crystal structure of phosphopantetheine adenylyltransferase from Enterococcus faecalis in the ligand-unbound state and in complex with ATP and pantetheine.</title>
        <authorList>
            <person name="Yoon H.J."/>
            <person name="Kang J.Y."/>
            <person name="Mikami B."/>
            <person name="Lee H.H."/>
            <person name="Suh S.W."/>
        </authorList>
    </citation>
    <scope>X-RAY CRYSTALLOGRAPHY (2.30 ANGSTROMS) OF APOENZYME AND IN COMPLEXES WITH ATP OR PANTETHEINE</scope>
    <source>
        <strain>ATCC 700802 / V583</strain>
    </source>
</reference>
<proteinExistence type="evidence at protein level"/>
<organism>
    <name type="scientific">Enterococcus faecalis (strain ATCC 700802 / V583)</name>
    <dbReference type="NCBI Taxonomy" id="226185"/>
    <lineage>
        <taxon>Bacteria</taxon>
        <taxon>Bacillati</taxon>
        <taxon>Bacillota</taxon>
        <taxon>Bacilli</taxon>
        <taxon>Lactobacillales</taxon>
        <taxon>Enterococcaceae</taxon>
        <taxon>Enterococcus</taxon>
    </lineage>
</organism>
<accession>Q831P9</accession>
<name>COAD_ENTFA</name>
<protein>
    <recommendedName>
        <fullName evidence="1 4 5">Phosphopantetheine adenylyltransferase</fullName>
        <ecNumber evidence="1">2.7.7.3</ecNumber>
    </recommendedName>
    <alternativeName>
        <fullName evidence="1">Dephospho-CoA pyrophosphorylase</fullName>
    </alternativeName>
    <alternativeName>
        <fullName evidence="1">Pantetheine-phosphate adenylyltransferase</fullName>
        <shortName evidence="1 5">PPAT</shortName>
    </alternativeName>
</protein>
<feature type="chain" id="PRO_0000156207" description="Phosphopantetheine adenylyltransferase">
    <location>
        <begin position="1"/>
        <end position="163"/>
    </location>
</feature>
<feature type="binding site" evidence="3 7">
    <location>
        <position position="10"/>
    </location>
    <ligand>
        <name>ATP</name>
        <dbReference type="ChEBI" id="CHEBI:30616"/>
    </ligand>
</feature>
<feature type="binding site" evidence="1">
    <location>
        <position position="10"/>
    </location>
    <ligand>
        <name>substrate</name>
    </ligand>
</feature>
<feature type="binding site" evidence="1 3 7">
    <location>
        <position position="18"/>
    </location>
    <ligand>
        <name>ATP</name>
        <dbReference type="ChEBI" id="CHEBI:30616"/>
    </ligand>
</feature>
<feature type="binding site" evidence="1">
    <location>
        <position position="42"/>
    </location>
    <ligand>
        <name>substrate</name>
    </ligand>
</feature>
<feature type="binding site" evidence="1 6 8">
    <location>
        <position position="75"/>
    </location>
    <ligand>
        <name>substrate</name>
    </ligand>
</feature>
<feature type="binding site" evidence="1">
    <location>
        <position position="89"/>
    </location>
    <ligand>
        <name>substrate</name>
    </ligand>
</feature>
<feature type="binding site" evidence="1 3 7">
    <location>
        <begin position="90"/>
        <end position="92"/>
    </location>
    <ligand>
        <name>ATP</name>
        <dbReference type="ChEBI" id="CHEBI:30616"/>
    </ligand>
</feature>
<feature type="binding site" evidence="1 3 7">
    <location>
        <position position="100"/>
    </location>
    <ligand>
        <name>ATP</name>
        <dbReference type="ChEBI" id="CHEBI:30616"/>
    </ligand>
</feature>
<feature type="binding site" evidence="1 3 7">
    <location>
        <begin position="125"/>
        <end position="131"/>
    </location>
    <ligand>
        <name>ATP</name>
        <dbReference type="ChEBI" id="CHEBI:30616"/>
    </ligand>
</feature>
<feature type="site" description="Transition state stabilizer" evidence="1">
    <location>
        <position position="18"/>
    </location>
</feature>
<feature type="strand" evidence="9">
    <location>
        <begin position="4"/>
        <end position="9"/>
    </location>
</feature>
<feature type="helix" evidence="9">
    <location>
        <begin position="16"/>
        <end position="26"/>
    </location>
</feature>
<feature type="strand" evidence="9">
    <location>
        <begin position="30"/>
        <end position="38"/>
    </location>
</feature>
<feature type="helix" evidence="9">
    <location>
        <begin position="48"/>
        <end position="59"/>
    </location>
</feature>
<feature type="strand" evidence="9">
    <location>
        <begin position="65"/>
        <end position="73"/>
    </location>
</feature>
<feature type="helix" evidence="9">
    <location>
        <begin position="75"/>
        <end position="82"/>
    </location>
</feature>
<feature type="strand" evidence="9">
    <location>
        <begin position="86"/>
        <end position="91"/>
    </location>
</feature>
<feature type="helix" evidence="9">
    <location>
        <begin position="94"/>
        <end position="110"/>
    </location>
</feature>
<feature type="strand" evidence="9">
    <location>
        <begin position="114"/>
        <end position="120"/>
    </location>
</feature>
<feature type="helix" evidence="9">
    <location>
        <begin position="123"/>
        <end position="125"/>
    </location>
</feature>
<feature type="helix" evidence="9">
    <location>
        <begin position="130"/>
        <end position="138"/>
    </location>
</feature>
<feature type="helix" evidence="9">
    <location>
        <begin position="144"/>
        <end position="146"/>
    </location>
</feature>
<feature type="helix" evidence="9">
    <location>
        <begin position="149"/>
        <end position="157"/>
    </location>
</feature>
<gene>
    <name evidence="1" type="primary">coaD</name>
    <name type="ordered locus">EF_2451</name>
</gene>
<comment type="function">
    <text evidence="1">Reversibly transfers an adenylyl group from ATP to 4'-phosphopantetheine, yielding dephospho-CoA (dPCoA) and pyrophosphate.</text>
</comment>
<comment type="catalytic activity">
    <reaction evidence="1">
        <text>(R)-4'-phosphopantetheine + ATP + H(+) = 3'-dephospho-CoA + diphosphate</text>
        <dbReference type="Rhea" id="RHEA:19801"/>
        <dbReference type="ChEBI" id="CHEBI:15378"/>
        <dbReference type="ChEBI" id="CHEBI:30616"/>
        <dbReference type="ChEBI" id="CHEBI:33019"/>
        <dbReference type="ChEBI" id="CHEBI:57328"/>
        <dbReference type="ChEBI" id="CHEBI:61723"/>
        <dbReference type="EC" id="2.7.7.3"/>
    </reaction>
</comment>
<comment type="cofactor">
    <cofactor evidence="1">
        <name>Mg(2+)</name>
        <dbReference type="ChEBI" id="CHEBI:18420"/>
    </cofactor>
</comment>
<comment type="pathway">
    <text evidence="1">Cofactor biosynthesis; coenzyme A biosynthesis; CoA from (R)-pantothenate: step 4/5.</text>
</comment>
<comment type="subunit">
    <text evidence="1 2">Homohexamer.</text>
</comment>
<comment type="subcellular location">
    <subcellularLocation>
        <location evidence="1">Cytoplasm</location>
    </subcellularLocation>
</comment>
<comment type="similarity">
    <text evidence="1">Belongs to the bacterial CoaD family.</text>
</comment>